<keyword id="KW-0378">Hydrolase</keyword>
<keyword id="KW-0507">mRNA processing</keyword>
<keyword id="KW-0539">Nucleus</keyword>
<keyword id="KW-0904">Protein phosphatase</keyword>
<keyword id="KW-1185">Reference proteome</keyword>
<protein>
    <recommendedName>
        <fullName>RNA polymerase II subunit A C-terminal domain phosphatase ssu72</fullName>
        <shortName>CTD phosphatase ssu72</shortName>
        <ecNumber>3.1.3.16</ecNumber>
    </recommendedName>
    <alternativeName>
        <fullName>Suppressor of SUA7 protein 2 homolog</fullName>
    </alternativeName>
</protein>
<feature type="chain" id="PRO_0000255604" description="RNA polymerase II subunit A C-terminal domain phosphatase ssu72">
    <location>
        <begin position="1"/>
        <end position="262"/>
    </location>
</feature>
<feature type="region of interest" description="Disordered" evidence="2">
    <location>
        <begin position="1"/>
        <end position="21"/>
    </location>
</feature>
<organism>
    <name type="scientific">Aspergillus oryzae (strain ATCC 42149 / RIB 40)</name>
    <name type="common">Yellow koji mold</name>
    <dbReference type="NCBI Taxonomy" id="510516"/>
    <lineage>
        <taxon>Eukaryota</taxon>
        <taxon>Fungi</taxon>
        <taxon>Dikarya</taxon>
        <taxon>Ascomycota</taxon>
        <taxon>Pezizomycotina</taxon>
        <taxon>Eurotiomycetes</taxon>
        <taxon>Eurotiomycetidae</taxon>
        <taxon>Eurotiales</taxon>
        <taxon>Aspergillaceae</taxon>
        <taxon>Aspergillus</taxon>
        <taxon>Aspergillus subgen. Circumdati</taxon>
    </lineage>
</organism>
<reference key="1">
    <citation type="journal article" date="2005" name="Nature">
        <title>Genome sequencing and analysis of Aspergillus oryzae.</title>
        <authorList>
            <person name="Machida M."/>
            <person name="Asai K."/>
            <person name="Sano M."/>
            <person name="Tanaka T."/>
            <person name="Kumagai T."/>
            <person name="Terai G."/>
            <person name="Kusumoto K."/>
            <person name="Arima T."/>
            <person name="Akita O."/>
            <person name="Kashiwagi Y."/>
            <person name="Abe K."/>
            <person name="Gomi K."/>
            <person name="Horiuchi H."/>
            <person name="Kitamoto K."/>
            <person name="Kobayashi T."/>
            <person name="Takeuchi M."/>
            <person name="Denning D.W."/>
            <person name="Galagan J.E."/>
            <person name="Nierman W.C."/>
            <person name="Yu J."/>
            <person name="Archer D.B."/>
            <person name="Bennett J.W."/>
            <person name="Bhatnagar D."/>
            <person name="Cleveland T.E."/>
            <person name="Fedorova N.D."/>
            <person name="Gotoh O."/>
            <person name="Horikawa H."/>
            <person name="Hosoyama A."/>
            <person name="Ichinomiya M."/>
            <person name="Igarashi R."/>
            <person name="Iwashita K."/>
            <person name="Juvvadi P.R."/>
            <person name="Kato M."/>
            <person name="Kato Y."/>
            <person name="Kin T."/>
            <person name="Kokubun A."/>
            <person name="Maeda H."/>
            <person name="Maeyama N."/>
            <person name="Maruyama J."/>
            <person name="Nagasaki H."/>
            <person name="Nakajima T."/>
            <person name="Oda K."/>
            <person name="Okada K."/>
            <person name="Paulsen I."/>
            <person name="Sakamoto K."/>
            <person name="Sawano T."/>
            <person name="Takahashi M."/>
            <person name="Takase K."/>
            <person name="Terabayashi Y."/>
            <person name="Wortman J.R."/>
            <person name="Yamada O."/>
            <person name="Yamagata Y."/>
            <person name="Anazawa H."/>
            <person name="Hata Y."/>
            <person name="Koide Y."/>
            <person name="Komori T."/>
            <person name="Koyama Y."/>
            <person name="Minetoki T."/>
            <person name="Suharnan S."/>
            <person name="Tanaka A."/>
            <person name="Isono K."/>
            <person name="Kuhara S."/>
            <person name="Ogasawara N."/>
            <person name="Kikuchi H."/>
        </authorList>
    </citation>
    <scope>NUCLEOTIDE SEQUENCE [LARGE SCALE GENOMIC DNA]</scope>
    <source>
        <strain>ATCC 42149 / RIB 40</strain>
    </source>
</reference>
<name>SSU72_ASPOR</name>
<dbReference type="EC" id="3.1.3.16"/>
<dbReference type="EMBL" id="BA000049">
    <property type="protein sequence ID" value="BAE56420.1"/>
    <property type="molecule type" value="Genomic_DNA"/>
</dbReference>
<dbReference type="SMR" id="Q2UPU5"/>
<dbReference type="STRING" id="510516.Q2UPU5"/>
<dbReference type="EnsemblFungi" id="BAE56420">
    <property type="protein sequence ID" value="BAE56420"/>
    <property type="gene ID" value="AO090005001504"/>
</dbReference>
<dbReference type="HOGENOM" id="CLU_062463_0_0_1"/>
<dbReference type="Proteomes" id="UP000006564">
    <property type="component" value="Chromosome 1"/>
</dbReference>
<dbReference type="GO" id="GO:0000785">
    <property type="term" value="C:chromatin"/>
    <property type="evidence" value="ECO:0007669"/>
    <property type="project" value="EnsemblFungi"/>
</dbReference>
<dbReference type="GO" id="GO:0005847">
    <property type="term" value="C:mRNA cleavage and polyadenylation specificity factor complex"/>
    <property type="evidence" value="ECO:0007669"/>
    <property type="project" value="EnsemblFungi"/>
</dbReference>
<dbReference type="GO" id="GO:0004725">
    <property type="term" value="F:protein tyrosine phosphatase activity"/>
    <property type="evidence" value="ECO:0007669"/>
    <property type="project" value="EnsemblFungi"/>
</dbReference>
<dbReference type="GO" id="GO:0180007">
    <property type="term" value="F:RNA polymerase II CTD heptapeptide repeat S5 phosphatase activity"/>
    <property type="evidence" value="ECO:0007669"/>
    <property type="project" value="EnsemblFungi"/>
</dbReference>
<dbReference type="GO" id="GO:0030643">
    <property type="term" value="P:intracellular phosphate ion homeostasis"/>
    <property type="evidence" value="ECO:0007669"/>
    <property type="project" value="EnsemblFungi"/>
</dbReference>
<dbReference type="GO" id="GO:0031124">
    <property type="term" value="P:mRNA 3'-end processing"/>
    <property type="evidence" value="ECO:0007669"/>
    <property type="project" value="EnsemblFungi"/>
</dbReference>
<dbReference type="GO" id="GO:0032215">
    <property type="term" value="P:positive regulation of telomere maintenance via semi-conservative replication"/>
    <property type="evidence" value="ECO:0007669"/>
    <property type="project" value="EnsemblFungi"/>
</dbReference>
<dbReference type="GO" id="GO:0090052">
    <property type="term" value="P:regulation of pericentric heterochromatin formation"/>
    <property type="evidence" value="ECO:0007669"/>
    <property type="project" value="EnsemblFungi"/>
</dbReference>
<dbReference type="GO" id="GO:1902801">
    <property type="term" value="P:regulation of siRNA-independent facultative heterochromatin formation"/>
    <property type="evidence" value="ECO:0007669"/>
    <property type="project" value="EnsemblFungi"/>
</dbReference>
<dbReference type="GO" id="GO:0009302">
    <property type="term" value="P:sno(s)RNA transcription"/>
    <property type="evidence" value="ECO:0007669"/>
    <property type="project" value="EnsemblFungi"/>
</dbReference>
<dbReference type="GO" id="GO:0030847">
    <property type="term" value="P:termination of RNA polymerase II transcription, exosome-dependent"/>
    <property type="evidence" value="ECO:0007669"/>
    <property type="project" value="EnsemblFungi"/>
</dbReference>
<dbReference type="GO" id="GO:0030846">
    <property type="term" value="P:termination of RNA polymerase II transcription, poly(A)-coupled"/>
    <property type="evidence" value="ECO:0007669"/>
    <property type="project" value="EnsemblFungi"/>
</dbReference>
<dbReference type="GO" id="GO:0031564">
    <property type="term" value="P:transcription antitermination"/>
    <property type="evidence" value="ECO:0007669"/>
    <property type="project" value="EnsemblFungi"/>
</dbReference>
<dbReference type="GO" id="GO:0006368">
    <property type="term" value="P:transcription elongation by RNA polymerase II"/>
    <property type="evidence" value="ECO:0007669"/>
    <property type="project" value="EnsemblFungi"/>
</dbReference>
<dbReference type="GO" id="GO:0001174">
    <property type="term" value="P:transcriptional start site selection at RNA polymerase II promoter"/>
    <property type="evidence" value="ECO:0007669"/>
    <property type="project" value="EnsemblFungi"/>
</dbReference>
<dbReference type="FunFam" id="3.40.50.2300:FF:000039">
    <property type="entry name" value="RNA polymerase II subunit A C-terminal domain phosphatase"/>
    <property type="match status" value="1"/>
</dbReference>
<dbReference type="FunFam" id="3.40.50.2300:FF:000189">
    <property type="entry name" value="SSU72p Phosphatase and transcription/RNA-processing factor"/>
    <property type="match status" value="1"/>
</dbReference>
<dbReference type="Gene3D" id="3.40.50.2300">
    <property type="match status" value="2"/>
</dbReference>
<dbReference type="InterPro" id="IPR006811">
    <property type="entry name" value="RNA_pol_II_suA"/>
</dbReference>
<dbReference type="PANTHER" id="PTHR20383">
    <property type="entry name" value="RNA POLYMERASE II SUBUNIT A C-TERMINAL DOMAIN PHOSPHATASE"/>
    <property type="match status" value="1"/>
</dbReference>
<dbReference type="Pfam" id="PF04722">
    <property type="entry name" value="Ssu72"/>
    <property type="match status" value="1"/>
</dbReference>
<comment type="function">
    <text evidence="1">Processively dephosphorylates Ser-5 of the heptad repeats YSPTSPS in the C-terminal domain of the largest RNA polymerase II subunit (rpb1).</text>
</comment>
<comment type="function">
    <text evidence="1">Component of the cleavage and polyadenylation factor (CPF) complex, which plays a key role in polyadenylation-dependent pre-mRNA 3'-end formation and cooperates with cleavage factors including the CFIA complex and NAB4/CFIB. Ssu72 is required for 3'-end formation of snoRNAs (By similarity).</text>
</comment>
<comment type="catalytic activity">
    <reaction>
        <text>O-phospho-L-seryl-[protein] + H2O = L-seryl-[protein] + phosphate</text>
        <dbReference type="Rhea" id="RHEA:20629"/>
        <dbReference type="Rhea" id="RHEA-COMP:9863"/>
        <dbReference type="Rhea" id="RHEA-COMP:11604"/>
        <dbReference type="ChEBI" id="CHEBI:15377"/>
        <dbReference type="ChEBI" id="CHEBI:29999"/>
        <dbReference type="ChEBI" id="CHEBI:43474"/>
        <dbReference type="ChEBI" id="CHEBI:83421"/>
        <dbReference type="EC" id="3.1.3.16"/>
    </reaction>
</comment>
<comment type="catalytic activity">
    <reaction>
        <text>O-phospho-L-threonyl-[protein] + H2O = L-threonyl-[protein] + phosphate</text>
        <dbReference type="Rhea" id="RHEA:47004"/>
        <dbReference type="Rhea" id="RHEA-COMP:11060"/>
        <dbReference type="Rhea" id="RHEA-COMP:11605"/>
        <dbReference type="ChEBI" id="CHEBI:15377"/>
        <dbReference type="ChEBI" id="CHEBI:30013"/>
        <dbReference type="ChEBI" id="CHEBI:43474"/>
        <dbReference type="ChEBI" id="CHEBI:61977"/>
        <dbReference type="EC" id="3.1.3.16"/>
    </reaction>
</comment>
<comment type="subunit">
    <text evidence="1">Component of the cleavage and polyadenylation factor (CPF) complex.</text>
</comment>
<comment type="subcellular location">
    <subcellularLocation>
        <location evidence="1">Nucleus</location>
    </subcellularLocation>
</comment>
<comment type="similarity">
    <text evidence="3">Belongs to the SSU72 phosphatase family.</text>
</comment>
<sequence>MAAPTETESSDGTAAAPTQEQQSDSYKLRFCTVCASNQNRSMEAHLRLSTAPSPFPVISFGTGSLVRLPGPSITQPNVYNFNTTSYSQMYEELYSKDERLYRNNGLLNMLERNRNLKWGPERFQDWVPGMPRVDHVAKGDKGALGTEGGVVDVIITCEERCWDAVVDDLMNKGSLLNRPVHVFNVDIKDNHEEALVGGKAILELANRLNEAAVQERKANNSEGWENGTGEARRSFDEKVPEILAAWQEKWPNLPALWTLAWL</sequence>
<evidence type="ECO:0000250" key="1"/>
<evidence type="ECO:0000256" key="2">
    <source>
        <dbReference type="SAM" id="MobiDB-lite"/>
    </source>
</evidence>
<evidence type="ECO:0000305" key="3"/>
<gene>
    <name type="primary">ssu72</name>
    <name type="ORF">AO090005001504</name>
</gene>
<proteinExistence type="inferred from homology"/>
<accession>Q2UPU5</accession>